<organism>
    <name type="scientific">Rickettsia conorii (strain ATCC VR-613 / Malish 7)</name>
    <dbReference type="NCBI Taxonomy" id="272944"/>
    <lineage>
        <taxon>Bacteria</taxon>
        <taxon>Pseudomonadati</taxon>
        <taxon>Pseudomonadota</taxon>
        <taxon>Alphaproteobacteria</taxon>
        <taxon>Rickettsiales</taxon>
        <taxon>Rickettsiaceae</taxon>
        <taxon>Rickettsieae</taxon>
        <taxon>Rickettsia</taxon>
        <taxon>spotted fever group</taxon>
    </lineage>
</organism>
<gene>
    <name evidence="1" type="primary">thrS</name>
    <name type="ordered locus">RC0296</name>
</gene>
<sequence>MINISFPDGSIKQFAKNITAYEVANAISMSLAKAAMVAEINGELQDLSIVIDNDCKLRILTAQDPECLEIIRHDAAHLTAEAVKELFPETQVTIGPAIENGYYYDFARDKPFTTDDLAVIEAKMQELSQKNEQVTRELWDRDKAVEFFKSIGEHYKAEIIASIPAGEPITLYRQGNFIDLCRGPHAPSTGVVKHFKLMKVAGAYWRGDSRNEMLQRIYGTAWATKEQLDSYLLMLEEAEKRDHRKLGRELDLFHFQEEAQGMVFWHDKGWSIYNTIEQYIRKKIRKNGYTEVKTPVLVDKSLWEASGHWEKFRDDMFALETDDKTLALKPMNCPCHVQIFKQGIKSYRDLPLRMSEFGLCHRNEASGALHGLMRVRSLVQDDAHIFCAAEQITDETVSFCKLLTEVYKDFGFTDIKVKFSDRPEIRAGSNEVWDKAENALKEAVEQAGFNYTLNPGEGAFYGPKLEFVLTDAIGRQWQCGTLQMDFVLPERLDASYVAASGEKKRPVMLHRAILGSLERFIGILIEEYAGRFPLWLAPVQVAIATITSDLNDYALEVQKALIDNGVRTDFNISPDKINYKIREFSNQKIPMIAVIGKQEQENKQVAIRRLGTTDQEVLSVEQLIAVVKEENEKYL</sequence>
<proteinExistence type="inferred from homology"/>
<comment type="function">
    <text evidence="1">Catalyzes the attachment of threonine to tRNA(Thr) in a two-step reaction: L-threonine is first activated by ATP to form Thr-AMP and then transferred to the acceptor end of tRNA(Thr). Also edits incorrectly charged L-seryl-tRNA(Thr).</text>
</comment>
<comment type="catalytic activity">
    <reaction evidence="1">
        <text>tRNA(Thr) + L-threonine + ATP = L-threonyl-tRNA(Thr) + AMP + diphosphate + H(+)</text>
        <dbReference type="Rhea" id="RHEA:24624"/>
        <dbReference type="Rhea" id="RHEA-COMP:9670"/>
        <dbReference type="Rhea" id="RHEA-COMP:9704"/>
        <dbReference type="ChEBI" id="CHEBI:15378"/>
        <dbReference type="ChEBI" id="CHEBI:30616"/>
        <dbReference type="ChEBI" id="CHEBI:33019"/>
        <dbReference type="ChEBI" id="CHEBI:57926"/>
        <dbReference type="ChEBI" id="CHEBI:78442"/>
        <dbReference type="ChEBI" id="CHEBI:78534"/>
        <dbReference type="ChEBI" id="CHEBI:456215"/>
        <dbReference type="EC" id="6.1.1.3"/>
    </reaction>
</comment>
<comment type="cofactor">
    <cofactor evidence="1">
        <name>Zn(2+)</name>
        <dbReference type="ChEBI" id="CHEBI:29105"/>
    </cofactor>
    <text evidence="1">Binds 1 zinc ion per subunit.</text>
</comment>
<comment type="subunit">
    <text evidence="1">Homodimer.</text>
</comment>
<comment type="subcellular location">
    <subcellularLocation>
        <location evidence="1">Cytoplasm</location>
    </subcellularLocation>
</comment>
<comment type="similarity">
    <text evidence="1">Belongs to the class-II aminoacyl-tRNA synthetase family.</text>
</comment>
<feature type="chain" id="PRO_0000101036" description="Threonine--tRNA ligase">
    <location>
        <begin position="1"/>
        <end position="635"/>
    </location>
</feature>
<feature type="domain" description="TGS" evidence="2">
    <location>
        <begin position="1"/>
        <end position="61"/>
    </location>
</feature>
<feature type="region of interest" description="Catalytic" evidence="1">
    <location>
        <begin position="242"/>
        <end position="533"/>
    </location>
</feature>
<feature type="binding site" evidence="1">
    <location>
        <position position="333"/>
    </location>
    <ligand>
        <name>Zn(2+)</name>
        <dbReference type="ChEBI" id="CHEBI:29105"/>
    </ligand>
</feature>
<feature type="binding site" evidence="1">
    <location>
        <position position="384"/>
    </location>
    <ligand>
        <name>Zn(2+)</name>
        <dbReference type="ChEBI" id="CHEBI:29105"/>
    </ligand>
</feature>
<feature type="binding site" evidence="1">
    <location>
        <position position="510"/>
    </location>
    <ligand>
        <name>Zn(2+)</name>
        <dbReference type="ChEBI" id="CHEBI:29105"/>
    </ligand>
</feature>
<evidence type="ECO:0000255" key="1">
    <source>
        <dbReference type="HAMAP-Rule" id="MF_00184"/>
    </source>
</evidence>
<evidence type="ECO:0000255" key="2">
    <source>
        <dbReference type="PROSITE-ProRule" id="PRU01228"/>
    </source>
</evidence>
<dbReference type="EC" id="6.1.1.3" evidence="1"/>
<dbReference type="EMBL" id="AE006914">
    <property type="protein sequence ID" value="AAL02834.1"/>
    <property type="molecule type" value="Genomic_DNA"/>
</dbReference>
<dbReference type="PIR" id="H97736">
    <property type="entry name" value="H97736"/>
</dbReference>
<dbReference type="RefSeq" id="WP_010976955.1">
    <property type="nucleotide sequence ID" value="NC_003103.1"/>
</dbReference>
<dbReference type="SMR" id="Q92IX4"/>
<dbReference type="GeneID" id="927857"/>
<dbReference type="KEGG" id="rco:RC0296"/>
<dbReference type="PATRIC" id="fig|272944.4.peg.337"/>
<dbReference type="HOGENOM" id="CLU_008554_0_1_5"/>
<dbReference type="Proteomes" id="UP000000816">
    <property type="component" value="Chromosome"/>
</dbReference>
<dbReference type="GO" id="GO:0005737">
    <property type="term" value="C:cytoplasm"/>
    <property type="evidence" value="ECO:0007669"/>
    <property type="project" value="UniProtKB-SubCell"/>
</dbReference>
<dbReference type="GO" id="GO:0005524">
    <property type="term" value="F:ATP binding"/>
    <property type="evidence" value="ECO:0007669"/>
    <property type="project" value="UniProtKB-UniRule"/>
</dbReference>
<dbReference type="GO" id="GO:0046872">
    <property type="term" value="F:metal ion binding"/>
    <property type="evidence" value="ECO:0007669"/>
    <property type="project" value="UniProtKB-KW"/>
</dbReference>
<dbReference type="GO" id="GO:0004829">
    <property type="term" value="F:threonine-tRNA ligase activity"/>
    <property type="evidence" value="ECO:0007669"/>
    <property type="project" value="UniProtKB-UniRule"/>
</dbReference>
<dbReference type="GO" id="GO:0000049">
    <property type="term" value="F:tRNA binding"/>
    <property type="evidence" value="ECO:0007669"/>
    <property type="project" value="UniProtKB-KW"/>
</dbReference>
<dbReference type="GO" id="GO:0006435">
    <property type="term" value="P:threonyl-tRNA aminoacylation"/>
    <property type="evidence" value="ECO:0007669"/>
    <property type="project" value="UniProtKB-UniRule"/>
</dbReference>
<dbReference type="CDD" id="cd01667">
    <property type="entry name" value="TGS_ThrRS"/>
    <property type="match status" value="1"/>
</dbReference>
<dbReference type="CDD" id="cd00860">
    <property type="entry name" value="ThrRS_anticodon"/>
    <property type="match status" value="1"/>
</dbReference>
<dbReference type="CDD" id="cd00771">
    <property type="entry name" value="ThrRS_core"/>
    <property type="match status" value="1"/>
</dbReference>
<dbReference type="FunFam" id="3.10.20.30:FF:000005">
    <property type="entry name" value="Threonine--tRNA ligase"/>
    <property type="match status" value="1"/>
</dbReference>
<dbReference type="FunFam" id="3.30.54.20:FF:000002">
    <property type="entry name" value="Threonine--tRNA ligase"/>
    <property type="match status" value="1"/>
</dbReference>
<dbReference type="FunFam" id="3.30.930.10:FF:000002">
    <property type="entry name" value="Threonine--tRNA ligase"/>
    <property type="match status" value="1"/>
</dbReference>
<dbReference type="FunFam" id="3.40.50.800:FF:000001">
    <property type="entry name" value="Threonine--tRNA ligase"/>
    <property type="match status" value="1"/>
</dbReference>
<dbReference type="FunFam" id="3.30.980.10:FF:000005">
    <property type="entry name" value="Threonyl-tRNA synthetase, mitochondrial"/>
    <property type="match status" value="1"/>
</dbReference>
<dbReference type="Gene3D" id="3.10.20.30">
    <property type="match status" value="1"/>
</dbReference>
<dbReference type="Gene3D" id="3.30.54.20">
    <property type="match status" value="1"/>
</dbReference>
<dbReference type="Gene3D" id="3.40.50.800">
    <property type="entry name" value="Anticodon-binding domain"/>
    <property type="match status" value="1"/>
</dbReference>
<dbReference type="Gene3D" id="3.30.930.10">
    <property type="entry name" value="Bira Bifunctional Protein, Domain 2"/>
    <property type="match status" value="1"/>
</dbReference>
<dbReference type="Gene3D" id="3.30.980.10">
    <property type="entry name" value="Threonyl-trna Synthetase, Chain A, domain 2"/>
    <property type="match status" value="1"/>
</dbReference>
<dbReference type="HAMAP" id="MF_00184">
    <property type="entry name" value="Thr_tRNA_synth"/>
    <property type="match status" value="1"/>
</dbReference>
<dbReference type="InterPro" id="IPR002314">
    <property type="entry name" value="aa-tRNA-synt_IIb"/>
</dbReference>
<dbReference type="InterPro" id="IPR006195">
    <property type="entry name" value="aa-tRNA-synth_II"/>
</dbReference>
<dbReference type="InterPro" id="IPR045864">
    <property type="entry name" value="aa-tRNA-synth_II/BPL/LPL"/>
</dbReference>
<dbReference type="InterPro" id="IPR004154">
    <property type="entry name" value="Anticodon-bd"/>
</dbReference>
<dbReference type="InterPro" id="IPR036621">
    <property type="entry name" value="Anticodon-bd_dom_sf"/>
</dbReference>
<dbReference type="InterPro" id="IPR012675">
    <property type="entry name" value="Beta-grasp_dom_sf"/>
</dbReference>
<dbReference type="InterPro" id="IPR004095">
    <property type="entry name" value="TGS"/>
</dbReference>
<dbReference type="InterPro" id="IPR012676">
    <property type="entry name" value="TGS-like"/>
</dbReference>
<dbReference type="InterPro" id="IPR002320">
    <property type="entry name" value="Thr-tRNA-ligase_IIa"/>
</dbReference>
<dbReference type="InterPro" id="IPR018163">
    <property type="entry name" value="Thr/Ala-tRNA-synth_IIc_edit"/>
</dbReference>
<dbReference type="InterPro" id="IPR047246">
    <property type="entry name" value="ThrRS_anticodon"/>
</dbReference>
<dbReference type="InterPro" id="IPR033728">
    <property type="entry name" value="ThrRS_core"/>
</dbReference>
<dbReference type="InterPro" id="IPR012947">
    <property type="entry name" value="tRNA_SAD"/>
</dbReference>
<dbReference type="NCBIfam" id="TIGR00418">
    <property type="entry name" value="thrS"/>
    <property type="match status" value="1"/>
</dbReference>
<dbReference type="PANTHER" id="PTHR11451:SF44">
    <property type="entry name" value="THREONINE--TRNA LIGASE, CHLOROPLASTIC_MITOCHONDRIAL 2"/>
    <property type="match status" value="1"/>
</dbReference>
<dbReference type="PANTHER" id="PTHR11451">
    <property type="entry name" value="THREONINE-TRNA LIGASE"/>
    <property type="match status" value="1"/>
</dbReference>
<dbReference type="Pfam" id="PF03129">
    <property type="entry name" value="HGTP_anticodon"/>
    <property type="match status" value="1"/>
</dbReference>
<dbReference type="Pfam" id="PF02824">
    <property type="entry name" value="TGS"/>
    <property type="match status" value="1"/>
</dbReference>
<dbReference type="Pfam" id="PF00587">
    <property type="entry name" value="tRNA-synt_2b"/>
    <property type="match status" value="1"/>
</dbReference>
<dbReference type="Pfam" id="PF07973">
    <property type="entry name" value="tRNA_SAD"/>
    <property type="match status" value="1"/>
</dbReference>
<dbReference type="PRINTS" id="PR01047">
    <property type="entry name" value="TRNASYNTHTHR"/>
</dbReference>
<dbReference type="SMART" id="SM00863">
    <property type="entry name" value="tRNA_SAD"/>
    <property type="match status" value="1"/>
</dbReference>
<dbReference type="SUPFAM" id="SSF52954">
    <property type="entry name" value="Class II aaRS ABD-related"/>
    <property type="match status" value="1"/>
</dbReference>
<dbReference type="SUPFAM" id="SSF55681">
    <property type="entry name" value="Class II aaRS and biotin synthetases"/>
    <property type="match status" value="1"/>
</dbReference>
<dbReference type="SUPFAM" id="SSF81271">
    <property type="entry name" value="TGS-like"/>
    <property type="match status" value="1"/>
</dbReference>
<dbReference type="SUPFAM" id="SSF55186">
    <property type="entry name" value="ThrRS/AlaRS common domain"/>
    <property type="match status" value="1"/>
</dbReference>
<dbReference type="PROSITE" id="PS50862">
    <property type="entry name" value="AA_TRNA_LIGASE_II"/>
    <property type="match status" value="1"/>
</dbReference>
<dbReference type="PROSITE" id="PS51880">
    <property type="entry name" value="TGS"/>
    <property type="match status" value="1"/>
</dbReference>
<protein>
    <recommendedName>
        <fullName evidence="1">Threonine--tRNA ligase</fullName>
        <ecNumber evidence="1">6.1.1.3</ecNumber>
    </recommendedName>
    <alternativeName>
        <fullName evidence="1">Threonyl-tRNA synthetase</fullName>
        <shortName evidence="1">ThrRS</shortName>
    </alternativeName>
</protein>
<reference key="1">
    <citation type="journal article" date="2001" name="Science">
        <title>Mechanisms of evolution in Rickettsia conorii and R. prowazekii.</title>
        <authorList>
            <person name="Ogata H."/>
            <person name="Audic S."/>
            <person name="Renesto-Audiffren P."/>
            <person name="Fournier P.-E."/>
            <person name="Barbe V."/>
            <person name="Samson D."/>
            <person name="Roux V."/>
            <person name="Cossart P."/>
            <person name="Weissenbach J."/>
            <person name="Claverie J.-M."/>
            <person name="Raoult D."/>
        </authorList>
    </citation>
    <scope>NUCLEOTIDE SEQUENCE [LARGE SCALE GENOMIC DNA]</scope>
    <source>
        <strain>ATCC VR-613 / Malish 7</strain>
    </source>
</reference>
<name>SYT_RICCN</name>
<keyword id="KW-0030">Aminoacyl-tRNA synthetase</keyword>
<keyword id="KW-0067">ATP-binding</keyword>
<keyword id="KW-0963">Cytoplasm</keyword>
<keyword id="KW-0436">Ligase</keyword>
<keyword id="KW-0479">Metal-binding</keyword>
<keyword id="KW-0547">Nucleotide-binding</keyword>
<keyword id="KW-0648">Protein biosynthesis</keyword>
<keyword id="KW-0694">RNA-binding</keyword>
<keyword id="KW-0820">tRNA-binding</keyword>
<keyword id="KW-0862">Zinc</keyword>
<accession>Q92IX4</accession>